<organism>
    <name type="scientific">Amia calva</name>
    <name type="common">Bowfin</name>
    <dbReference type="NCBI Taxonomy" id="7924"/>
    <lineage>
        <taxon>Eukaryota</taxon>
        <taxon>Metazoa</taxon>
        <taxon>Chordata</taxon>
        <taxon>Craniata</taxon>
        <taxon>Vertebrata</taxon>
        <taxon>Euteleostomi</taxon>
        <taxon>Actinopterygii</taxon>
        <taxon>Neopterygii</taxon>
        <taxon>Holostei</taxon>
        <taxon>Amiiformes</taxon>
        <taxon>Amiidae</taxon>
        <taxon>Amia</taxon>
    </lineage>
</organism>
<name>COX2_AMICA</name>
<comment type="function">
    <text evidence="2">Component of the cytochrome c oxidase, the last enzyme in the mitochondrial electron transport chain which drives oxidative phosphorylation. The respiratory chain contains 3 multisubunit complexes succinate dehydrogenase (complex II, CII), ubiquinol-cytochrome c oxidoreductase (cytochrome b-c1 complex, complex III, CIII) and cytochrome c oxidase (complex IV, CIV), that cooperate to transfer electrons derived from NADH and succinate to molecular oxygen, creating an electrochemical gradient over the inner membrane that drives transmembrane transport and the ATP synthase. Cytochrome c oxidase is the component of the respiratory chain that catalyzes the reduction of oxygen to water. Electrons originating from reduced cytochrome c in the intermembrane space (IMS) are transferred via the dinuclear copper A center (CU(A)) of subunit 2 and heme A of subunit 1 to the active site in subunit 1, a binuclear center (BNC) formed by heme A3 and copper B (CU(B)). The BNC reduces molecular oxygen to 2 water molecules using 4 electrons from cytochrome c in the IMS and 4 protons from the mitochondrial matrix.</text>
</comment>
<comment type="catalytic activity">
    <reaction evidence="2">
        <text>4 Fe(II)-[cytochrome c] + O2 + 8 H(+)(in) = 4 Fe(III)-[cytochrome c] + 2 H2O + 4 H(+)(out)</text>
        <dbReference type="Rhea" id="RHEA:11436"/>
        <dbReference type="Rhea" id="RHEA-COMP:10350"/>
        <dbReference type="Rhea" id="RHEA-COMP:14399"/>
        <dbReference type="ChEBI" id="CHEBI:15377"/>
        <dbReference type="ChEBI" id="CHEBI:15378"/>
        <dbReference type="ChEBI" id="CHEBI:15379"/>
        <dbReference type="ChEBI" id="CHEBI:29033"/>
        <dbReference type="ChEBI" id="CHEBI:29034"/>
        <dbReference type="EC" id="7.1.1.9"/>
    </reaction>
    <physiologicalReaction direction="left-to-right" evidence="2">
        <dbReference type="Rhea" id="RHEA:11437"/>
    </physiologicalReaction>
</comment>
<comment type="cofactor">
    <cofactor evidence="3">
        <name>Cu cation</name>
        <dbReference type="ChEBI" id="CHEBI:23378"/>
    </cofactor>
    <text evidence="3">Binds a dinuclear copper A center per subunit.</text>
</comment>
<comment type="subunit">
    <text evidence="1 3">Component of the cytochrome c oxidase (complex IV, CIV), a multisubunit enzyme composed of 14 subunits. The complex is composed of a catalytic core of 3 subunits MT-CO1, MT-CO2 and MT-CO3, encoded in the mitochondrial DNA, and 11 supernumerary subunits COX4I, COX5A, COX5B, COX6A, COX6B, COX6C, COX7A, COX7B, COX7C, COX8 and NDUFA4, which are encoded in the nuclear genome. The complex exists as a monomer or a dimer and forms supercomplexes (SCs) in the inner mitochondrial membrane with NADH-ubiquinone oxidoreductase (complex I, CI) and ubiquinol-cytochrome c oxidoreductase (cytochrome b-c1 complex, complex III, CIII), resulting in different assemblies (supercomplex SCI(1)III(2)IV(1) and megacomplex MCI(2)III(2)IV(2)) (By similarity). Found in a complex with TMEM177, COA6, COX18, COX20, SCO1 and SCO2. Interacts with TMEM177 in a COX20-dependent manner. Interacts with COX20. Interacts with COX16 (By similarity).</text>
</comment>
<comment type="subcellular location">
    <subcellularLocation>
        <location evidence="3">Mitochondrion inner membrane</location>
        <topology evidence="3">Multi-pass membrane protein</topology>
    </subcellularLocation>
</comment>
<comment type="similarity">
    <text evidence="4">Belongs to the cytochrome c oxidase subunit 2 family.</text>
</comment>
<proteinExistence type="inferred from homology"/>
<reference key="1">
    <citation type="journal article" date="1991" name="Mol. Biol. Evol.">
        <title>Phylogenetic relationships of neopterygian fishes, inferred from mitochondrial DNA sequences.</title>
        <authorList>
            <person name="Normark B.B."/>
            <person name="McCune A.R."/>
            <person name="Harrison R.G."/>
        </authorList>
    </citation>
    <scope>NUCLEOTIDE SEQUENCE [GENOMIC DNA]</scope>
</reference>
<gene>
    <name type="primary">mt-co2</name>
    <name type="synonym">coii</name>
    <name type="synonym">coxii</name>
    <name type="synonym">mtco2</name>
</gene>
<protein>
    <recommendedName>
        <fullName>Cytochrome c oxidase subunit 2</fullName>
        <ecNumber>7.1.1.9</ecNumber>
    </recommendedName>
    <alternativeName>
        <fullName>Cytochrome c oxidase polypeptide II</fullName>
    </alternativeName>
</protein>
<sequence>MAHPMQLGFQDAASPVMEELLHFHDHALMIVFLISTAVLYIIVVTVTTKLTDKYVLDAQEIEMVWTIMPAVVLI</sequence>
<keyword id="KW-0186">Copper</keyword>
<keyword id="KW-0249">Electron transport</keyword>
<keyword id="KW-0472">Membrane</keyword>
<keyword id="KW-0496">Mitochondrion</keyword>
<keyword id="KW-0999">Mitochondrion inner membrane</keyword>
<keyword id="KW-0679">Respiratory chain</keyword>
<keyword id="KW-1278">Translocase</keyword>
<keyword id="KW-0812">Transmembrane</keyword>
<keyword id="KW-1133">Transmembrane helix</keyword>
<keyword id="KW-0813">Transport</keyword>
<accession>P29655</accession>
<feature type="chain" id="PRO_0000183491" description="Cytochrome c oxidase subunit 2">
    <location>
        <begin position="1"/>
        <end position="74" status="greater than"/>
    </location>
</feature>
<feature type="topological domain" description="Mitochondrial intermembrane" evidence="3">
    <location>
        <begin position="1"/>
        <end position="14"/>
    </location>
</feature>
<feature type="transmembrane region" description="Helical; Name=I" evidence="3">
    <location>
        <begin position="15"/>
        <end position="45"/>
    </location>
</feature>
<feature type="topological domain" description="Mitochondrial matrix" evidence="3">
    <location>
        <begin position="46"/>
        <end position="74" status="greater than"/>
    </location>
</feature>
<feature type="non-terminal residue">
    <location>
        <position position="74"/>
    </location>
</feature>
<geneLocation type="mitochondrion"/>
<evidence type="ECO:0000250" key="1">
    <source>
        <dbReference type="UniProtKB" id="P00403"/>
    </source>
</evidence>
<evidence type="ECO:0000250" key="2">
    <source>
        <dbReference type="UniProtKB" id="P00410"/>
    </source>
</evidence>
<evidence type="ECO:0000250" key="3">
    <source>
        <dbReference type="UniProtKB" id="P68530"/>
    </source>
</evidence>
<evidence type="ECO:0000305" key="4"/>
<dbReference type="EC" id="7.1.1.9"/>
<dbReference type="EMBL" id="M64886">
    <property type="protein sequence ID" value="AAB01438.1"/>
    <property type="molecule type" value="Genomic_DNA"/>
</dbReference>
<dbReference type="SMR" id="P29655"/>
<dbReference type="GO" id="GO:0005743">
    <property type="term" value="C:mitochondrial inner membrane"/>
    <property type="evidence" value="ECO:0007669"/>
    <property type="project" value="UniProtKB-SubCell"/>
</dbReference>
<dbReference type="GO" id="GO:0045277">
    <property type="term" value="C:respiratory chain complex IV"/>
    <property type="evidence" value="ECO:0000250"/>
    <property type="project" value="UniProtKB"/>
</dbReference>
<dbReference type="GO" id="GO:0004129">
    <property type="term" value="F:cytochrome-c oxidase activity"/>
    <property type="evidence" value="ECO:0007669"/>
    <property type="project" value="UniProtKB-EC"/>
</dbReference>
<dbReference type="GO" id="GO:0042773">
    <property type="term" value="P:ATP synthesis coupled electron transport"/>
    <property type="evidence" value="ECO:0007669"/>
    <property type="project" value="TreeGrafter"/>
</dbReference>
<dbReference type="FunFam" id="1.10.287.90:FF:000001">
    <property type="entry name" value="Cytochrome c oxidase subunit 2"/>
    <property type="match status" value="1"/>
</dbReference>
<dbReference type="Gene3D" id="1.10.287.90">
    <property type="match status" value="1"/>
</dbReference>
<dbReference type="InterPro" id="IPR045187">
    <property type="entry name" value="CcO_II"/>
</dbReference>
<dbReference type="InterPro" id="IPR011759">
    <property type="entry name" value="Cyt_c_oxidase_su2_TM_dom"/>
</dbReference>
<dbReference type="InterPro" id="IPR036257">
    <property type="entry name" value="Cyt_c_oxidase_su2_TM_sf"/>
</dbReference>
<dbReference type="PANTHER" id="PTHR22888:SF9">
    <property type="entry name" value="CYTOCHROME C OXIDASE SUBUNIT 2"/>
    <property type="match status" value="1"/>
</dbReference>
<dbReference type="PANTHER" id="PTHR22888">
    <property type="entry name" value="CYTOCHROME C OXIDASE, SUBUNIT II"/>
    <property type="match status" value="1"/>
</dbReference>
<dbReference type="Pfam" id="PF02790">
    <property type="entry name" value="COX2_TM"/>
    <property type="match status" value="1"/>
</dbReference>
<dbReference type="SUPFAM" id="SSF81464">
    <property type="entry name" value="Cytochrome c oxidase subunit II-like, transmembrane region"/>
    <property type="match status" value="1"/>
</dbReference>
<dbReference type="PROSITE" id="PS50999">
    <property type="entry name" value="COX2_TM"/>
    <property type="match status" value="1"/>
</dbReference>